<name>NSK1_SCHPO</name>
<proteinExistence type="evidence at protein level"/>
<accession>Q7LL22</accession>
<reference key="1">
    <citation type="journal article" date="2002" name="Nature">
        <title>The genome sequence of Schizosaccharomyces pombe.</title>
        <authorList>
            <person name="Wood V."/>
            <person name="Gwilliam R."/>
            <person name="Rajandream M.A."/>
            <person name="Lyne M.H."/>
            <person name="Lyne R."/>
            <person name="Stewart A."/>
            <person name="Sgouros J.G."/>
            <person name="Peat N."/>
            <person name="Hayles J."/>
            <person name="Baker S.G."/>
            <person name="Basham D."/>
            <person name="Bowman S."/>
            <person name="Brooks K."/>
            <person name="Brown D."/>
            <person name="Brown S."/>
            <person name="Chillingworth T."/>
            <person name="Churcher C.M."/>
            <person name="Collins M."/>
            <person name="Connor R."/>
            <person name="Cronin A."/>
            <person name="Davis P."/>
            <person name="Feltwell T."/>
            <person name="Fraser A."/>
            <person name="Gentles S."/>
            <person name="Goble A."/>
            <person name="Hamlin N."/>
            <person name="Harris D.E."/>
            <person name="Hidalgo J."/>
            <person name="Hodgson G."/>
            <person name="Holroyd S."/>
            <person name="Hornsby T."/>
            <person name="Howarth S."/>
            <person name="Huckle E.J."/>
            <person name="Hunt S."/>
            <person name="Jagels K."/>
            <person name="James K.D."/>
            <person name="Jones L."/>
            <person name="Jones M."/>
            <person name="Leather S."/>
            <person name="McDonald S."/>
            <person name="McLean J."/>
            <person name="Mooney P."/>
            <person name="Moule S."/>
            <person name="Mungall K.L."/>
            <person name="Murphy L.D."/>
            <person name="Niblett D."/>
            <person name="Odell C."/>
            <person name="Oliver K."/>
            <person name="O'Neil S."/>
            <person name="Pearson D."/>
            <person name="Quail M.A."/>
            <person name="Rabbinowitsch E."/>
            <person name="Rutherford K.M."/>
            <person name="Rutter S."/>
            <person name="Saunders D."/>
            <person name="Seeger K."/>
            <person name="Sharp S."/>
            <person name="Skelton J."/>
            <person name="Simmonds M.N."/>
            <person name="Squares R."/>
            <person name="Squares S."/>
            <person name="Stevens K."/>
            <person name="Taylor K."/>
            <person name="Taylor R.G."/>
            <person name="Tivey A."/>
            <person name="Walsh S.V."/>
            <person name="Warren T."/>
            <person name="Whitehead S."/>
            <person name="Woodward J.R."/>
            <person name="Volckaert G."/>
            <person name="Aert R."/>
            <person name="Robben J."/>
            <person name="Grymonprez B."/>
            <person name="Weltjens I."/>
            <person name="Vanstreels E."/>
            <person name="Rieger M."/>
            <person name="Schaefer M."/>
            <person name="Mueller-Auer S."/>
            <person name="Gabel C."/>
            <person name="Fuchs M."/>
            <person name="Duesterhoeft A."/>
            <person name="Fritzc C."/>
            <person name="Holzer E."/>
            <person name="Moestl D."/>
            <person name="Hilbert H."/>
            <person name="Borzym K."/>
            <person name="Langer I."/>
            <person name="Beck A."/>
            <person name="Lehrach H."/>
            <person name="Reinhardt R."/>
            <person name="Pohl T.M."/>
            <person name="Eger P."/>
            <person name="Zimmermann W."/>
            <person name="Wedler H."/>
            <person name="Wambutt R."/>
            <person name="Purnelle B."/>
            <person name="Goffeau A."/>
            <person name="Cadieu E."/>
            <person name="Dreano S."/>
            <person name="Gloux S."/>
            <person name="Lelaure V."/>
            <person name="Mottier S."/>
            <person name="Galibert F."/>
            <person name="Aves S.J."/>
            <person name="Xiang Z."/>
            <person name="Hunt C."/>
            <person name="Moore K."/>
            <person name="Hurst S.M."/>
            <person name="Lucas M."/>
            <person name="Rochet M."/>
            <person name="Gaillardin C."/>
            <person name="Tallada V.A."/>
            <person name="Garzon A."/>
            <person name="Thode G."/>
            <person name="Daga R.R."/>
            <person name="Cruzado L."/>
            <person name="Jimenez J."/>
            <person name="Sanchez M."/>
            <person name="del Rey F."/>
            <person name="Benito J."/>
            <person name="Dominguez A."/>
            <person name="Revuelta J.L."/>
            <person name="Moreno S."/>
            <person name="Armstrong J."/>
            <person name="Forsburg S.L."/>
            <person name="Cerutti L."/>
            <person name="Lowe T."/>
            <person name="McCombie W.R."/>
            <person name="Paulsen I."/>
            <person name="Potashkin J."/>
            <person name="Shpakovski G.V."/>
            <person name="Ussery D."/>
            <person name="Barrell B.G."/>
            <person name="Nurse P."/>
        </authorList>
    </citation>
    <scope>NUCLEOTIDE SEQUENCE [LARGE SCALE GENOMIC DNA]</scope>
    <source>
        <strain>972 / ATCC 24843</strain>
    </source>
</reference>
<reference key="2">
    <citation type="journal article" date="2006" name="Nat. Biotechnol.">
        <title>ORFeome cloning and global analysis of protein localization in the fission yeast Schizosaccharomyces pombe.</title>
        <authorList>
            <person name="Matsuyama A."/>
            <person name="Arai R."/>
            <person name="Yashiroda Y."/>
            <person name="Shirai A."/>
            <person name="Kamata A."/>
            <person name="Sekido S."/>
            <person name="Kobayashi Y."/>
            <person name="Hashimoto A."/>
            <person name="Hamamoto M."/>
            <person name="Hiraoka Y."/>
            <person name="Horinouchi S."/>
            <person name="Yoshida M."/>
        </authorList>
    </citation>
    <scope>SUBCELLULAR LOCATION [LARGE SCALE ANALYSIS]</scope>
</reference>
<reference key="3">
    <citation type="journal article" date="2011" name="J. Cell Biol.">
        <title>Cdk1 phosphorylation of the kinetochore protein Nsk1 prevents error-prone chromosome segregation.</title>
        <authorList>
            <person name="Chen J.S."/>
            <person name="Lu L.X."/>
            <person name="Ohi M.D."/>
            <person name="Creamer K.M."/>
            <person name="English C."/>
            <person name="Partridge J.F."/>
            <person name="Ohi R."/>
            <person name="Gould K.L."/>
        </authorList>
    </citation>
    <scope>FUNCTION</scope>
    <scope>SUBCELLULAR LOCATION</scope>
    <scope>INTERACTION WITH DLC1</scope>
</reference>
<reference key="4">
    <citation type="journal article" date="2011" name="Mol. Biol. Cell">
        <title>Nsk1 ensures accurate chromosome segregation by promoting association of kinetochores to spindle poles during anaphase B.</title>
        <authorList>
            <person name="Buttrick G.J."/>
            <person name="Meadows J.C."/>
            <person name="Lancaster T.C."/>
            <person name="Vanoosthuyse V."/>
            <person name="Shepperd L.A."/>
            <person name="Hoe K.L."/>
            <person name="Kim D.U."/>
            <person name="Park H.O."/>
            <person name="Hardwick K.G."/>
            <person name="Millar J.B."/>
        </authorList>
    </citation>
    <scope>FUNCTION</scope>
    <scope>SUBCELLULAR LOCATION</scope>
</reference>
<gene>
    <name type="primary">nsk1</name>
    <name type="ORF">SPAC3G9.01</name>
</gene>
<dbReference type="EMBL" id="CU329670">
    <property type="protein sequence ID" value="CAB38630.1"/>
    <property type="molecule type" value="Genomic_DNA"/>
</dbReference>
<dbReference type="RefSeq" id="NP_001018258.1">
    <property type="nucleotide sequence ID" value="NM_001019512.2"/>
</dbReference>
<dbReference type="SMR" id="Q7LL22"/>
<dbReference type="BioGRID" id="280546">
    <property type="interactions" value="39"/>
</dbReference>
<dbReference type="STRING" id="284812.Q7LL22"/>
<dbReference type="iPTMnet" id="Q7LL22"/>
<dbReference type="PaxDb" id="4896-SPAC3G9.01.1"/>
<dbReference type="EnsemblFungi" id="SPAC3G9.01.1">
    <property type="protein sequence ID" value="SPAC3G9.01.1:pep"/>
    <property type="gene ID" value="SPAC3G9.01"/>
</dbReference>
<dbReference type="GeneID" id="3361470"/>
<dbReference type="KEGG" id="spo:3361470"/>
<dbReference type="PomBase" id="SPAC3G9.01">
    <property type="gene designation" value="nsk1"/>
</dbReference>
<dbReference type="VEuPathDB" id="FungiDB:SPAC3G9.01"/>
<dbReference type="HOGENOM" id="CLU_592053_0_0_1"/>
<dbReference type="InParanoid" id="Q7LL22"/>
<dbReference type="PhylomeDB" id="Q7LL22"/>
<dbReference type="CD-CODE" id="576F0A76">
    <property type="entry name" value="Centrosome"/>
</dbReference>
<dbReference type="PRO" id="PR:Q7LL22"/>
<dbReference type="Proteomes" id="UP000002485">
    <property type="component" value="Chromosome I"/>
</dbReference>
<dbReference type="GO" id="GO:0005737">
    <property type="term" value="C:cytoplasm"/>
    <property type="evidence" value="ECO:0007669"/>
    <property type="project" value="UniProtKB-KW"/>
</dbReference>
<dbReference type="GO" id="GO:0072686">
    <property type="term" value="C:mitotic spindle"/>
    <property type="evidence" value="ECO:0000314"/>
    <property type="project" value="PomBase"/>
</dbReference>
<dbReference type="GO" id="GO:0044816">
    <property type="term" value="C:Nsk1-Dlc1 complex"/>
    <property type="evidence" value="ECO:0000314"/>
    <property type="project" value="PomBase"/>
</dbReference>
<dbReference type="GO" id="GO:0005730">
    <property type="term" value="C:nucleolus"/>
    <property type="evidence" value="ECO:0000314"/>
    <property type="project" value="PomBase"/>
</dbReference>
<dbReference type="GO" id="GO:0005654">
    <property type="term" value="C:nucleoplasm"/>
    <property type="evidence" value="ECO:0000314"/>
    <property type="project" value="PomBase"/>
</dbReference>
<dbReference type="GO" id="GO:0005634">
    <property type="term" value="C:nucleus"/>
    <property type="evidence" value="ECO:0000314"/>
    <property type="project" value="PomBase"/>
</dbReference>
<dbReference type="GO" id="GO:0000940">
    <property type="term" value="C:outer kinetochore"/>
    <property type="evidence" value="ECO:0000314"/>
    <property type="project" value="PomBase"/>
</dbReference>
<dbReference type="GO" id="GO:0061499">
    <property type="term" value="C:outer plaque of mitotic spindle pole body"/>
    <property type="evidence" value="ECO:0000314"/>
    <property type="project" value="PomBase"/>
</dbReference>
<dbReference type="GO" id="GO:0051010">
    <property type="term" value="F:microtubule plus-end binding"/>
    <property type="evidence" value="ECO:0000269"/>
    <property type="project" value="PomBase"/>
</dbReference>
<dbReference type="GO" id="GO:0051315">
    <property type="term" value="P:attachment of mitotic spindle microtubules to kinetochore"/>
    <property type="evidence" value="ECO:0000315"/>
    <property type="project" value="PomBase"/>
</dbReference>
<dbReference type="GO" id="GO:0098653">
    <property type="term" value="P:centromere clustering"/>
    <property type="evidence" value="ECO:0000315"/>
    <property type="project" value="PomBase"/>
</dbReference>
<feature type="chain" id="PRO_0000304077" description="Kinetochore protein nsk1">
    <location>
        <begin position="1"/>
        <end position="462"/>
    </location>
</feature>
<feature type="region of interest" description="Disordered" evidence="1">
    <location>
        <begin position="104"/>
        <end position="161"/>
    </location>
</feature>
<feature type="region of interest" description="Disordered" evidence="1">
    <location>
        <begin position="180"/>
        <end position="240"/>
    </location>
</feature>
<feature type="region of interest" description="Disordered" evidence="1">
    <location>
        <begin position="320"/>
        <end position="462"/>
    </location>
</feature>
<feature type="compositionally biased region" description="Polar residues" evidence="1">
    <location>
        <begin position="104"/>
        <end position="120"/>
    </location>
</feature>
<feature type="compositionally biased region" description="Basic and acidic residues" evidence="1">
    <location>
        <begin position="121"/>
        <end position="138"/>
    </location>
</feature>
<feature type="compositionally biased region" description="Polar residues" evidence="1">
    <location>
        <begin position="146"/>
        <end position="156"/>
    </location>
</feature>
<feature type="compositionally biased region" description="Basic and acidic residues" evidence="1">
    <location>
        <begin position="180"/>
        <end position="189"/>
    </location>
</feature>
<feature type="compositionally biased region" description="Polar residues" evidence="1">
    <location>
        <begin position="229"/>
        <end position="240"/>
    </location>
</feature>
<feature type="compositionally biased region" description="Basic and acidic residues" evidence="1">
    <location>
        <begin position="324"/>
        <end position="333"/>
    </location>
</feature>
<feature type="compositionally biased region" description="Polar residues" evidence="1">
    <location>
        <begin position="422"/>
        <end position="444"/>
    </location>
</feature>
<feature type="compositionally biased region" description="Basic residues" evidence="1">
    <location>
        <begin position="449"/>
        <end position="462"/>
    </location>
</feature>
<comment type="function">
    <text evidence="2 3">Ensures chromosome alignment and accurate chromosome segregation during mitosis. Promotes proper kinetochore-microtubule (k-MT) interactions during anaphase B. The phosphorylation status of nsk1 affects the proper k-MT coupling, ensuring that it interacts stably only at the correct time during mitosis.</text>
</comment>
<comment type="subunit">
    <text evidence="3">Interacts with dlc1. The dlc1-nsk1 complex seems to oligomerize in chain-like structures. Also binds directly to spindle microtubules.</text>
</comment>
<comment type="subcellular location">
    <subcellularLocation>
        <location evidence="2">Nucleus</location>
        <location evidence="2">Nucleolus</location>
    </subcellularLocation>
    <subcellularLocation>
        <location evidence="2 3">Cytoplasm</location>
        <location evidence="2 3">Cytoskeleton</location>
        <location evidence="2 3">Spindle</location>
    </subcellularLocation>
    <subcellularLocation>
        <location evidence="2 3">Chromosome</location>
        <location evidence="2 3">Centromere</location>
        <location evidence="2 3">Kinetochore</location>
    </subcellularLocation>
    <text evidence="2">Undergoes cell cycle-dependent localization changes, nucleolar during interphase, distributed in the nucleoplasm during metaphase, and increased at kinetochores and the spindle during anaphase.</text>
</comment>
<comment type="PTM">
    <text>Phosphorylated by cdk1 at prometaphase arrest. Phosphorylation prevents nsk1 kinetochore and spindle targeting. Dephosphorylated by clp1 at anaphase onset controls its relocalization.</text>
</comment>
<protein>
    <recommendedName>
        <fullName>Kinetochore protein nsk1</fullName>
    </recommendedName>
    <alternativeName>
        <fullName>Nucleolus spindle kinetochore protein 1</fullName>
    </alternativeName>
</protein>
<evidence type="ECO:0000256" key="1">
    <source>
        <dbReference type="SAM" id="MobiDB-lite"/>
    </source>
</evidence>
<evidence type="ECO:0000269" key="2">
    <source>
    </source>
</evidence>
<evidence type="ECO:0000269" key="3">
    <source>
    </source>
</evidence>
<sequence length="462" mass="51571">MAYKLSLSAVEPLLIFPAAPFSTKKEKSTFQNNLISSDVFSSALKPLSPLKSLVADFSTHSNPSKDNQLISPPKINHREFLNEEKESDTQTRYLKQLINICNSPSKNHETSLSPSKSTIDNNERKLDNEIDNYKHDVKYSPYKGQGKTSNPSQGTTKCPGIFEEDNFFSVSPKRRKNLFEKYGKTDLGKPARVPSPKKSLSSTIKSPPSRVKLPTSILSKSPPLKVPNKNRSSTFSPLRTPTSSSKTFVIVDHSTPSPPSIRTKLEAFAPNSTFATQKRLRRLATLESSPALRSTLKSLQSKSSPVKLLKLKEEKAKIKNQLFKSEEEKDPVGKQKLPLESSLSPLDHSSAEKEMQKAPAKNKRRRTGSLETGLYPKESPTPSKKRSKRVLWSLKHIVSPGNREKHSLNSTPESIMKKDTKWPQNLAKNNINSEPNTPTKSNIDTGKAHSARAHKTRKNIQS</sequence>
<keyword id="KW-0137">Centromere</keyword>
<keyword id="KW-0158">Chromosome</keyword>
<keyword id="KW-0963">Cytoplasm</keyword>
<keyword id="KW-0206">Cytoskeleton</keyword>
<keyword id="KW-0995">Kinetochore</keyword>
<keyword id="KW-0539">Nucleus</keyword>
<keyword id="KW-1185">Reference proteome</keyword>
<organism>
    <name type="scientific">Schizosaccharomyces pombe (strain 972 / ATCC 24843)</name>
    <name type="common">Fission yeast</name>
    <dbReference type="NCBI Taxonomy" id="284812"/>
    <lineage>
        <taxon>Eukaryota</taxon>
        <taxon>Fungi</taxon>
        <taxon>Dikarya</taxon>
        <taxon>Ascomycota</taxon>
        <taxon>Taphrinomycotina</taxon>
        <taxon>Schizosaccharomycetes</taxon>
        <taxon>Schizosaccharomycetales</taxon>
        <taxon>Schizosaccharomycetaceae</taxon>
        <taxon>Schizosaccharomyces</taxon>
    </lineage>
</organism>